<reference key="1">
    <citation type="journal article" date="2007" name="PLoS Genet.">
        <title>Patterns and implications of gene gain and loss in the evolution of Prochlorococcus.</title>
        <authorList>
            <person name="Kettler G.C."/>
            <person name="Martiny A.C."/>
            <person name="Huang K."/>
            <person name="Zucker J."/>
            <person name="Coleman M.L."/>
            <person name="Rodrigue S."/>
            <person name="Chen F."/>
            <person name="Lapidus A."/>
            <person name="Ferriera S."/>
            <person name="Johnson J."/>
            <person name="Steglich C."/>
            <person name="Church G.M."/>
            <person name="Richardson P."/>
            <person name="Chisholm S.W."/>
        </authorList>
    </citation>
    <scope>NUCLEOTIDE SEQUENCE [LARGE SCALE GENOMIC DNA]</scope>
    <source>
        <strain>MIT 9303</strain>
    </source>
</reference>
<gene>
    <name evidence="1" type="primary">rpsP</name>
    <name evidence="1" type="synonym">rps16</name>
    <name type="ordered locus">P9303_19551</name>
</gene>
<keyword id="KW-0687">Ribonucleoprotein</keyword>
<keyword id="KW-0689">Ribosomal protein</keyword>
<comment type="similarity">
    <text evidence="1">Belongs to the bacterial ribosomal protein bS16 family.</text>
</comment>
<name>RS16_PROM3</name>
<organism>
    <name type="scientific">Prochlorococcus marinus (strain MIT 9303)</name>
    <dbReference type="NCBI Taxonomy" id="59922"/>
    <lineage>
        <taxon>Bacteria</taxon>
        <taxon>Bacillati</taxon>
        <taxon>Cyanobacteriota</taxon>
        <taxon>Cyanophyceae</taxon>
        <taxon>Synechococcales</taxon>
        <taxon>Prochlorococcaceae</taxon>
        <taxon>Prochlorococcus</taxon>
    </lineage>
</organism>
<feature type="chain" id="PRO_1000049315" description="Small ribosomal subunit protein bS16">
    <location>
        <begin position="1"/>
        <end position="122"/>
    </location>
</feature>
<feature type="region of interest" description="Disordered" evidence="2">
    <location>
        <begin position="87"/>
        <end position="122"/>
    </location>
</feature>
<protein>
    <recommendedName>
        <fullName evidence="1">Small ribosomal subunit protein bS16</fullName>
    </recommendedName>
    <alternativeName>
        <fullName evidence="3">30S ribosomal protein S16</fullName>
    </alternativeName>
</protein>
<dbReference type="EMBL" id="CP000554">
    <property type="protein sequence ID" value="ABM78697.1"/>
    <property type="molecule type" value="Genomic_DNA"/>
</dbReference>
<dbReference type="RefSeq" id="WP_011826578.1">
    <property type="nucleotide sequence ID" value="NC_008820.1"/>
</dbReference>
<dbReference type="SMR" id="A2CB37"/>
<dbReference type="STRING" id="59922.P9303_19551"/>
<dbReference type="KEGG" id="pmf:P9303_19551"/>
<dbReference type="HOGENOM" id="CLU_100590_3_2_3"/>
<dbReference type="BioCyc" id="PMAR59922:G1G80-1699-MONOMER"/>
<dbReference type="Proteomes" id="UP000002274">
    <property type="component" value="Chromosome"/>
</dbReference>
<dbReference type="GO" id="GO:0005737">
    <property type="term" value="C:cytoplasm"/>
    <property type="evidence" value="ECO:0007669"/>
    <property type="project" value="UniProtKB-ARBA"/>
</dbReference>
<dbReference type="GO" id="GO:0015935">
    <property type="term" value="C:small ribosomal subunit"/>
    <property type="evidence" value="ECO:0007669"/>
    <property type="project" value="TreeGrafter"/>
</dbReference>
<dbReference type="GO" id="GO:0003735">
    <property type="term" value="F:structural constituent of ribosome"/>
    <property type="evidence" value="ECO:0007669"/>
    <property type="project" value="InterPro"/>
</dbReference>
<dbReference type="GO" id="GO:0006412">
    <property type="term" value="P:translation"/>
    <property type="evidence" value="ECO:0007669"/>
    <property type="project" value="UniProtKB-UniRule"/>
</dbReference>
<dbReference type="Gene3D" id="3.30.1320.10">
    <property type="match status" value="1"/>
</dbReference>
<dbReference type="HAMAP" id="MF_00385">
    <property type="entry name" value="Ribosomal_bS16"/>
    <property type="match status" value="1"/>
</dbReference>
<dbReference type="InterPro" id="IPR000307">
    <property type="entry name" value="Ribosomal_bS16"/>
</dbReference>
<dbReference type="InterPro" id="IPR020592">
    <property type="entry name" value="Ribosomal_bS16_CS"/>
</dbReference>
<dbReference type="InterPro" id="IPR023803">
    <property type="entry name" value="Ribosomal_bS16_dom_sf"/>
</dbReference>
<dbReference type="NCBIfam" id="TIGR00002">
    <property type="entry name" value="S16"/>
    <property type="match status" value="1"/>
</dbReference>
<dbReference type="PANTHER" id="PTHR12919">
    <property type="entry name" value="30S RIBOSOMAL PROTEIN S16"/>
    <property type="match status" value="1"/>
</dbReference>
<dbReference type="PANTHER" id="PTHR12919:SF20">
    <property type="entry name" value="SMALL RIBOSOMAL SUBUNIT PROTEIN BS16M"/>
    <property type="match status" value="1"/>
</dbReference>
<dbReference type="Pfam" id="PF00886">
    <property type="entry name" value="Ribosomal_S16"/>
    <property type="match status" value="1"/>
</dbReference>
<dbReference type="SUPFAM" id="SSF54565">
    <property type="entry name" value="Ribosomal protein S16"/>
    <property type="match status" value="1"/>
</dbReference>
<dbReference type="PROSITE" id="PS00732">
    <property type="entry name" value="RIBOSOMAL_S16"/>
    <property type="match status" value="1"/>
</dbReference>
<proteinExistence type="inferred from homology"/>
<accession>A2CB37</accession>
<sequence length="122" mass="13461">MIKLRLKRFGKKREASFRLVACNSTSRRDGRPLQELGFYNPRTKETRLDTEALRLRLSQGAQPTDAVRSLLEKGGLIEKTVRPAEVVGKAKQAEARKAGAKNVAKQAAEAKAEETPADNTEA</sequence>
<evidence type="ECO:0000255" key="1">
    <source>
        <dbReference type="HAMAP-Rule" id="MF_00385"/>
    </source>
</evidence>
<evidence type="ECO:0000256" key="2">
    <source>
        <dbReference type="SAM" id="MobiDB-lite"/>
    </source>
</evidence>
<evidence type="ECO:0000305" key="3"/>